<accession>Q86TV6</accession>
<accession>Q86U24</accession>
<accession>Q86VT3</accession>
<name>TTC7B_HUMAN</name>
<sequence>MATKKAGSRLETEIERCRSECQWERIPELVKQLSAKLIANDDMAELLLGESKLEQYLKEHPLRQGASPRGPKPQLTEVRKHLTAALDRGNLKSEFLQESNLIMAKLNYVEGDYKEALNIYARVGLDDLPLTAVPPYRLRVIAEAYATKGLCLEKLPISSSTSNLHVDREQDVITCYEKAGDIALLYLQEIERVILSNIQNRSPKPGPAPHDQELGFFLETGLQRAHVLYFKNGNLTRGVGRFRELLRAVETRTTQNLRMTIARQLAEILLRGMCEQSYWNPLEDPPCQSPLDDPLRKGANTKTYTLTRRARVYSGENIFCPQENTEEALLLLLISESMANRDAVLSRIPEHKSDRLISLQSASVVYDLLTIALGRRGQYEMLSECLERAMKFAFEEFHLWYQFALSLMAAGKSARAVKVLKECIRLKPDDATIPLLAAKLCMGSLHWLEEAEKFAKTVVDVGEKTSEFKAKGYLALGLTYSLQATDASLRGMQEVLQRKALLAFQRAHSLSPTDHQAAFYLALQLAISRQIPEALGYVRQALQLQGDDANSLHLLALLLSAQKHYHDALNIIDMALSEYPENFILLFSKVKLQSLCRGPDEALLTCKHMLQIWKSCYNLTNPSDSGRGSSLLDRTIADRRQLNTITLPDFSDPETGSVHATSVAASRVEQALSEVASSLQSSAPKQGPLHPWMTLAQIWLHAAEVYIGIGKPAEATACTQEAANLFPMSHNVLYMRGQIAELRGSMDEARRWYEEALAISPTHVKSMQRLALILHQLGRYSLAEKILRDAVQVNSTAHEVWNGLGEVLQAQGNDAAATECFLTALELEASSPAVPFTIIPRVL</sequence>
<protein>
    <recommendedName>
        <fullName>Tetratricopeptide repeat protein 7B</fullName>
        <shortName>TPR repeat protein 7B</shortName>
    </recommendedName>
    <alternativeName>
        <fullName>Tetratricopeptide repeat protein 7-like-1</fullName>
        <shortName>TPR repeat protein 7-like-1</shortName>
    </alternativeName>
</protein>
<keyword id="KW-0002">3D-structure</keyword>
<keyword id="KW-0025">Alternative splicing</keyword>
<keyword id="KW-1003">Cell membrane</keyword>
<keyword id="KW-0963">Cytoplasm</keyword>
<keyword id="KW-0472">Membrane</keyword>
<keyword id="KW-0597">Phosphoprotein</keyword>
<keyword id="KW-1267">Proteomics identification</keyword>
<keyword id="KW-1185">Reference proteome</keyword>
<keyword id="KW-0677">Repeat</keyword>
<keyword id="KW-0802">TPR repeat</keyword>
<reference key="1">
    <citation type="journal article" date="2003" name="Nature">
        <title>The DNA sequence and analysis of human chromosome 14.</title>
        <authorList>
            <person name="Heilig R."/>
            <person name="Eckenberg R."/>
            <person name="Petit J.-L."/>
            <person name="Fonknechten N."/>
            <person name="Da Silva C."/>
            <person name="Cattolico L."/>
            <person name="Levy M."/>
            <person name="Barbe V."/>
            <person name="De Berardinis V."/>
            <person name="Ureta-Vidal A."/>
            <person name="Pelletier E."/>
            <person name="Vico V."/>
            <person name="Anthouard V."/>
            <person name="Rowen L."/>
            <person name="Madan A."/>
            <person name="Qin S."/>
            <person name="Sun H."/>
            <person name="Du H."/>
            <person name="Pepin K."/>
            <person name="Artiguenave F."/>
            <person name="Robert C."/>
            <person name="Cruaud C."/>
            <person name="Bruels T."/>
            <person name="Jaillon O."/>
            <person name="Friedlander L."/>
            <person name="Samson G."/>
            <person name="Brottier P."/>
            <person name="Cure S."/>
            <person name="Segurens B."/>
            <person name="Aniere F."/>
            <person name="Samain S."/>
            <person name="Crespeau H."/>
            <person name="Abbasi N."/>
            <person name="Aiach N."/>
            <person name="Boscus D."/>
            <person name="Dickhoff R."/>
            <person name="Dors M."/>
            <person name="Dubois I."/>
            <person name="Friedman C."/>
            <person name="Gouyvenoux M."/>
            <person name="James R."/>
            <person name="Madan A."/>
            <person name="Mairey-Estrada B."/>
            <person name="Mangenot S."/>
            <person name="Martins N."/>
            <person name="Menard M."/>
            <person name="Oztas S."/>
            <person name="Ratcliffe A."/>
            <person name="Shaffer T."/>
            <person name="Trask B."/>
            <person name="Vacherie B."/>
            <person name="Bellemere C."/>
            <person name="Belser C."/>
            <person name="Besnard-Gonnet M."/>
            <person name="Bartol-Mavel D."/>
            <person name="Boutard M."/>
            <person name="Briez-Silla S."/>
            <person name="Combette S."/>
            <person name="Dufosse-Laurent V."/>
            <person name="Ferron C."/>
            <person name="Lechaplais C."/>
            <person name="Louesse C."/>
            <person name="Muselet D."/>
            <person name="Magdelenat G."/>
            <person name="Pateau E."/>
            <person name="Petit E."/>
            <person name="Sirvain-Trukniewicz P."/>
            <person name="Trybou A."/>
            <person name="Vega-Czarny N."/>
            <person name="Bataille E."/>
            <person name="Bluet E."/>
            <person name="Bordelais I."/>
            <person name="Dubois M."/>
            <person name="Dumont C."/>
            <person name="Guerin T."/>
            <person name="Haffray S."/>
            <person name="Hammadi R."/>
            <person name="Muanga J."/>
            <person name="Pellouin V."/>
            <person name="Robert D."/>
            <person name="Wunderle E."/>
            <person name="Gauguet G."/>
            <person name="Roy A."/>
            <person name="Sainte-Marthe L."/>
            <person name="Verdier J."/>
            <person name="Verdier-Discala C."/>
            <person name="Hillier L.W."/>
            <person name="Fulton L."/>
            <person name="McPherson J."/>
            <person name="Matsuda F."/>
            <person name="Wilson R."/>
            <person name="Scarpelli C."/>
            <person name="Gyapay G."/>
            <person name="Wincker P."/>
            <person name="Saurin W."/>
            <person name="Quetier F."/>
            <person name="Waterston R."/>
            <person name="Hood L."/>
            <person name="Weissenbach J."/>
        </authorList>
    </citation>
    <scope>NUCLEOTIDE SEQUENCE [LARGE SCALE GENOMIC DNA]</scope>
</reference>
<reference key="2">
    <citation type="journal article" date="2007" name="BMC Genomics">
        <title>The full-ORF clone resource of the German cDNA consortium.</title>
        <authorList>
            <person name="Bechtel S."/>
            <person name="Rosenfelder H."/>
            <person name="Duda A."/>
            <person name="Schmidt C.P."/>
            <person name="Ernst U."/>
            <person name="Wellenreuther R."/>
            <person name="Mehrle A."/>
            <person name="Schuster C."/>
            <person name="Bahr A."/>
            <person name="Bloecker H."/>
            <person name="Heubner D."/>
            <person name="Hoerlein A."/>
            <person name="Michel G."/>
            <person name="Wedler H."/>
            <person name="Koehrer K."/>
            <person name="Ottenwaelder B."/>
            <person name="Poustka A."/>
            <person name="Wiemann S."/>
            <person name="Schupp I."/>
        </authorList>
    </citation>
    <scope>NUCLEOTIDE SEQUENCE [LARGE SCALE MRNA] OF 68-843 (ISOFORM 1)</scope>
    <source>
        <tissue>Lymph node</tissue>
    </source>
</reference>
<reference key="3">
    <citation type="submission" date="2003-02" db="EMBL/GenBank/DDBJ databases">
        <title>Full-length cDNA libraries and normalization.</title>
        <authorList>
            <person name="Li W.B."/>
            <person name="Gruber C."/>
            <person name="Jessee J."/>
            <person name="Polayes D."/>
        </authorList>
    </citation>
    <scope>NUCLEOTIDE SEQUENCE [LARGE SCALE MRNA] OF 197-843 (ISOFORMS 1 AND 2)</scope>
    <source>
        <tissue>Neuroblastoma</tissue>
        <tissue>Placenta</tissue>
    </source>
</reference>
<reference key="4">
    <citation type="journal article" date="2004" name="Genome Res.">
        <title>The status, quality, and expansion of the NIH full-length cDNA project: the Mammalian Gene Collection (MGC).</title>
        <authorList>
            <consortium name="The MGC Project Team"/>
        </authorList>
    </citation>
    <scope>NUCLEOTIDE SEQUENCE [LARGE SCALE MRNA] OF 260-843 (ISOFORM 1)</scope>
    <source>
        <tissue>Liver</tissue>
    </source>
</reference>
<reference key="5">
    <citation type="journal article" date="2008" name="J. Proteome Res.">
        <title>Combining protein-based IMAC, peptide-based IMAC, and MudPIT for efficient phosphoproteomic analysis.</title>
        <authorList>
            <person name="Cantin G.T."/>
            <person name="Yi W."/>
            <person name="Lu B."/>
            <person name="Park S.K."/>
            <person name="Xu T."/>
            <person name="Lee J.-D."/>
            <person name="Yates J.R. III"/>
        </authorList>
    </citation>
    <scope>IDENTIFICATION BY MASS SPECTROMETRY [LARGE SCALE ANALYSIS]</scope>
    <source>
        <tissue>Cervix carcinoma</tissue>
    </source>
</reference>
<reference key="6">
    <citation type="journal article" date="2009" name="Anal. Chem.">
        <title>Lys-N and trypsin cover complementary parts of the phosphoproteome in a refined SCX-based approach.</title>
        <authorList>
            <person name="Gauci S."/>
            <person name="Helbig A.O."/>
            <person name="Slijper M."/>
            <person name="Krijgsveld J."/>
            <person name="Heck A.J."/>
            <person name="Mohammed S."/>
        </authorList>
    </citation>
    <scope>IDENTIFICATION BY MASS SPECTROMETRY [LARGE SCALE ANALYSIS]</scope>
</reference>
<reference key="7">
    <citation type="journal article" date="2009" name="Sci. Signal.">
        <title>Quantitative phosphoproteomic analysis of T cell receptor signaling reveals system-wide modulation of protein-protein interactions.</title>
        <authorList>
            <person name="Mayya V."/>
            <person name="Lundgren D.H."/>
            <person name="Hwang S.-I."/>
            <person name="Rezaul K."/>
            <person name="Wu L."/>
            <person name="Eng J.K."/>
            <person name="Rodionov V."/>
            <person name="Han D.K."/>
        </authorList>
    </citation>
    <scope>PHOSPHORYLATION [LARGE SCALE ANALYSIS] AT SER-673</scope>
    <scope>IDENTIFICATION BY MASS SPECTROMETRY [LARGE SCALE ANALYSIS]</scope>
    <source>
        <tissue>Leukemic T-cell</tissue>
    </source>
</reference>
<reference key="8">
    <citation type="journal article" date="2012" name="J. Cell Biol.">
        <title>PtdIns4P synthesis by PI4KIIIalpha at the plasma membrane and its impact on plasma membrane identity.</title>
        <authorList>
            <person name="Nakatsu F."/>
            <person name="Baskin J.M."/>
            <person name="Chung J."/>
            <person name="Tanner L.B."/>
            <person name="Shui G."/>
            <person name="Lee S.Y."/>
            <person name="Pirruccello M."/>
            <person name="Hao M."/>
            <person name="Ingolia N.T."/>
            <person name="Wenk M.R."/>
            <person name="De Camilli P."/>
        </authorList>
    </citation>
    <scope>FUNCTION</scope>
    <scope>IDENTIFICATION IN THE PI4K COMPLEX</scope>
</reference>
<reference key="9">
    <citation type="journal article" date="2013" name="J. Proteome Res.">
        <title>Toward a comprehensive characterization of a human cancer cell phosphoproteome.</title>
        <authorList>
            <person name="Zhou H."/>
            <person name="Di Palma S."/>
            <person name="Preisinger C."/>
            <person name="Peng M."/>
            <person name="Polat A.N."/>
            <person name="Heck A.J."/>
            <person name="Mohammed S."/>
        </authorList>
    </citation>
    <scope>PHOSPHORYLATION [LARGE SCALE ANALYSIS] AT SER-160; SER-673; SER-677; SER-678 AND SER-681</scope>
    <scope>IDENTIFICATION BY MASS SPECTROMETRY [LARGE SCALE ANALYSIS]</scope>
    <source>
        <tissue>Cervix carcinoma</tissue>
        <tissue>Erythroleukemia</tissue>
    </source>
</reference>
<reference key="10">
    <citation type="journal article" date="2014" name="J. Proteomics">
        <title>An enzyme assisted RP-RPLC approach for in-depth analysis of human liver phosphoproteome.</title>
        <authorList>
            <person name="Bian Y."/>
            <person name="Song C."/>
            <person name="Cheng K."/>
            <person name="Dong M."/>
            <person name="Wang F."/>
            <person name="Huang J."/>
            <person name="Sun D."/>
            <person name="Wang L."/>
            <person name="Ye M."/>
            <person name="Zou H."/>
        </authorList>
    </citation>
    <scope>PHOSPHORYLATION [LARGE SCALE ANALYSIS] AT SER-678</scope>
    <scope>IDENTIFICATION BY MASS SPECTROMETRY [LARGE SCALE ANALYSIS]</scope>
    <source>
        <tissue>Liver</tissue>
    </source>
</reference>
<reference key="11">
    <citation type="journal article" date="2015" name="EMBO Rep.">
        <title>Plasticity of PI4KIIIalpha interactions at the plasma membrane.</title>
        <authorList>
            <person name="Chung J."/>
            <person name="Nakatsu F."/>
            <person name="Baskin J.M."/>
            <person name="De Camilli P."/>
        </authorList>
    </citation>
    <scope>IDENTIFICATION IN THE PI4K COMPLEX</scope>
</reference>
<reference key="12">
    <citation type="journal article" date="2016" name="Nat. Cell Biol.">
        <title>The leukodystrophy protein FAM126A (hyccin) regulates PtdIns(4)P synthesis at the plasma membrane.</title>
        <authorList>
            <person name="Baskin J.M."/>
            <person name="Wu X."/>
            <person name="Christiano R."/>
            <person name="Oh M.S."/>
            <person name="Schauder C.M."/>
            <person name="Gazzerro E."/>
            <person name="Messa M."/>
            <person name="Baldassari S."/>
            <person name="Assereto S."/>
            <person name="Biancheri R."/>
            <person name="Zara F."/>
            <person name="Minetti C."/>
            <person name="Raimondi A."/>
            <person name="Simons M."/>
            <person name="Walther T.C."/>
            <person name="Reinisch K.M."/>
            <person name="De Camilli P."/>
        </authorList>
    </citation>
    <scope>X-RAY CRYSTALLOGRAPHY (2.9 ANGSTROMS) OF 8-750 IN COMPLEX WITH HYCC1</scope>
    <scope>FUNCTION</scope>
    <scope>IDENTIFICATION IN THE PI4K COMPLEX</scope>
</reference>
<dbReference type="EMBL" id="AL096869">
    <property type="status" value="NOT_ANNOTATED_CDS"/>
    <property type="molecule type" value="Genomic_DNA"/>
</dbReference>
<dbReference type="EMBL" id="AL122020">
    <property type="status" value="NOT_ANNOTATED_CDS"/>
    <property type="molecule type" value="Genomic_DNA"/>
</dbReference>
<dbReference type="EMBL" id="AL139193">
    <property type="status" value="NOT_ANNOTATED_CDS"/>
    <property type="molecule type" value="Genomic_DNA"/>
</dbReference>
<dbReference type="EMBL" id="AL832848">
    <property type="protein sequence ID" value="CAI46128.1"/>
    <property type="status" value="ALT_SEQ"/>
    <property type="molecule type" value="mRNA"/>
</dbReference>
<dbReference type="EMBL" id="BX247966">
    <property type="protein sequence ID" value="CAD62305.1"/>
    <property type="molecule type" value="mRNA"/>
</dbReference>
<dbReference type="EMBL" id="BX248275">
    <property type="protein sequence ID" value="CAD62603.1"/>
    <property type="molecule type" value="mRNA"/>
</dbReference>
<dbReference type="EMBL" id="BC048270">
    <property type="protein sequence ID" value="AAH48270.2"/>
    <property type="molecule type" value="mRNA"/>
</dbReference>
<dbReference type="CCDS" id="CCDS32140.1">
    <molecule id="Q86TV6-1"/>
</dbReference>
<dbReference type="RefSeq" id="NP_001010854.1">
    <molecule id="Q86TV6-1"/>
    <property type="nucleotide sequence ID" value="NM_001010854.2"/>
</dbReference>
<dbReference type="RefSeq" id="NP_001307350.1">
    <property type="nucleotide sequence ID" value="NM_001320421.1"/>
</dbReference>
<dbReference type="RefSeq" id="XP_016876534.1">
    <property type="nucleotide sequence ID" value="XM_017021045.1"/>
</dbReference>
<dbReference type="RefSeq" id="XP_016876535.1">
    <property type="nucleotide sequence ID" value="XM_017021046.1"/>
</dbReference>
<dbReference type="PDB" id="5DSE">
    <property type="method" value="X-ray"/>
    <property type="resolution" value="2.90 A"/>
    <property type="chains" value="A/C=7-843"/>
</dbReference>
<dbReference type="PDB" id="6BQ1">
    <property type="method" value="EM"/>
    <property type="resolution" value="3.60 A"/>
    <property type="chains" value="B/F=1-843"/>
</dbReference>
<dbReference type="PDB" id="9B9G">
    <property type="method" value="EM"/>
    <property type="resolution" value="3.50 A"/>
    <property type="chains" value="D/F=1-843"/>
</dbReference>
<dbReference type="PDB" id="9BAX">
    <property type="method" value="EM"/>
    <property type="resolution" value="3.65 A"/>
    <property type="chains" value="D/F=1-843"/>
</dbReference>
<dbReference type="PDBsum" id="5DSE"/>
<dbReference type="PDBsum" id="6BQ1"/>
<dbReference type="PDBsum" id="9B9G"/>
<dbReference type="PDBsum" id="9BAX"/>
<dbReference type="EMDB" id="EMD-44382"/>
<dbReference type="EMDB" id="EMD-44413"/>
<dbReference type="EMDB" id="EMD-7129"/>
<dbReference type="SMR" id="Q86TV6"/>
<dbReference type="BioGRID" id="126922">
    <property type="interactions" value="27"/>
</dbReference>
<dbReference type="CORUM" id="Q86TV6"/>
<dbReference type="FunCoup" id="Q86TV6">
    <property type="interactions" value="1027"/>
</dbReference>
<dbReference type="IntAct" id="Q86TV6">
    <property type="interactions" value="19"/>
</dbReference>
<dbReference type="MINT" id="Q86TV6"/>
<dbReference type="STRING" id="9606.ENSP00000336127"/>
<dbReference type="GlyGen" id="Q86TV6">
    <property type="glycosylation" value="1 site, 1 O-linked glycan (1 site)"/>
</dbReference>
<dbReference type="iPTMnet" id="Q86TV6"/>
<dbReference type="PhosphoSitePlus" id="Q86TV6"/>
<dbReference type="SwissPalm" id="Q86TV6"/>
<dbReference type="BioMuta" id="TTC7B"/>
<dbReference type="DMDM" id="226693616"/>
<dbReference type="jPOST" id="Q86TV6"/>
<dbReference type="MassIVE" id="Q86TV6"/>
<dbReference type="PaxDb" id="9606-ENSP00000336127"/>
<dbReference type="PeptideAtlas" id="Q86TV6"/>
<dbReference type="ProteomicsDB" id="69737">
    <molecule id="Q86TV6-1"/>
</dbReference>
<dbReference type="ProteomicsDB" id="69738">
    <molecule id="Q86TV6-2"/>
</dbReference>
<dbReference type="Pumba" id="Q86TV6"/>
<dbReference type="Antibodypedia" id="26548">
    <property type="antibodies" value="28 antibodies from 14 providers"/>
</dbReference>
<dbReference type="DNASU" id="145567"/>
<dbReference type="Ensembl" id="ENST00000328459.11">
    <molecule id="Q86TV6-1"/>
    <property type="protein sequence ID" value="ENSP00000336127.4"/>
    <property type="gene ID" value="ENSG00000165914.15"/>
</dbReference>
<dbReference type="GeneID" id="145567"/>
<dbReference type="KEGG" id="hsa:145567"/>
<dbReference type="MANE-Select" id="ENST00000328459.11">
    <property type="protein sequence ID" value="ENSP00000336127.4"/>
    <property type="RefSeq nucleotide sequence ID" value="NM_001010854.2"/>
    <property type="RefSeq protein sequence ID" value="NP_001010854.1"/>
</dbReference>
<dbReference type="UCSC" id="uc001xyp.4">
    <molecule id="Q86TV6-1"/>
    <property type="organism name" value="human"/>
</dbReference>
<dbReference type="AGR" id="HGNC:19858"/>
<dbReference type="CTD" id="145567"/>
<dbReference type="DisGeNET" id="145567"/>
<dbReference type="GeneCards" id="TTC7B"/>
<dbReference type="HGNC" id="HGNC:19858">
    <property type="gene designation" value="TTC7B"/>
</dbReference>
<dbReference type="HPA" id="ENSG00000165914">
    <property type="expression patterns" value="Tissue enhanced (brain)"/>
</dbReference>
<dbReference type="MIM" id="620060">
    <property type="type" value="gene"/>
</dbReference>
<dbReference type="neXtProt" id="NX_Q86TV6"/>
<dbReference type="OpenTargets" id="ENSG00000165914"/>
<dbReference type="PharmGKB" id="PA134947112"/>
<dbReference type="VEuPathDB" id="HostDB:ENSG00000165914"/>
<dbReference type="eggNOG" id="KOG4162">
    <property type="taxonomic scope" value="Eukaryota"/>
</dbReference>
<dbReference type="GeneTree" id="ENSGT00940000158474"/>
<dbReference type="HOGENOM" id="CLU_010512_1_0_1"/>
<dbReference type="InParanoid" id="Q86TV6"/>
<dbReference type="OMA" id="EYYLACQ"/>
<dbReference type="OrthoDB" id="29013at2759"/>
<dbReference type="PAN-GO" id="Q86TV6">
    <property type="GO annotations" value="3 GO annotations based on evolutionary models"/>
</dbReference>
<dbReference type="PhylomeDB" id="Q86TV6"/>
<dbReference type="TreeFam" id="TF313783"/>
<dbReference type="PathwayCommons" id="Q86TV6"/>
<dbReference type="SignaLink" id="Q86TV6"/>
<dbReference type="BioGRID-ORCS" id="145567">
    <property type="hits" value="18 hits in 1156 CRISPR screens"/>
</dbReference>
<dbReference type="CD-CODE" id="FB4E32DD">
    <property type="entry name" value="Presynaptic clusters and postsynaptic densities"/>
</dbReference>
<dbReference type="ChiTaRS" id="TTC7B">
    <property type="organism name" value="human"/>
</dbReference>
<dbReference type="GenomeRNAi" id="145567"/>
<dbReference type="Pharos" id="Q86TV6">
    <property type="development level" value="Tbio"/>
</dbReference>
<dbReference type="PRO" id="PR:Q86TV6"/>
<dbReference type="Proteomes" id="UP000005640">
    <property type="component" value="Chromosome 14"/>
</dbReference>
<dbReference type="RNAct" id="Q86TV6">
    <property type="molecule type" value="protein"/>
</dbReference>
<dbReference type="Bgee" id="ENSG00000165914">
    <property type="expression patterns" value="Expressed in lateral nuclear group of thalamus and 174 other cell types or tissues"/>
</dbReference>
<dbReference type="ExpressionAtlas" id="Q86TV6">
    <property type="expression patterns" value="baseline and differential"/>
</dbReference>
<dbReference type="GO" id="GO:0005829">
    <property type="term" value="C:cytosol"/>
    <property type="evidence" value="ECO:0000314"/>
    <property type="project" value="UniProtKB"/>
</dbReference>
<dbReference type="GO" id="GO:0005886">
    <property type="term" value="C:plasma membrane"/>
    <property type="evidence" value="ECO:0000314"/>
    <property type="project" value="UniProtKB"/>
</dbReference>
<dbReference type="GO" id="GO:0046854">
    <property type="term" value="P:phosphatidylinositol phosphate biosynthetic process"/>
    <property type="evidence" value="ECO:0000314"/>
    <property type="project" value="UniProtKB"/>
</dbReference>
<dbReference type="GO" id="GO:0072659">
    <property type="term" value="P:protein localization to plasma membrane"/>
    <property type="evidence" value="ECO:0000314"/>
    <property type="project" value="UniProtKB"/>
</dbReference>
<dbReference type="FunFam" id="1.25.40.10:FF:000030">
    <property type="entry name" value="Tetratricopeptide repeat domain 7B"/>
    <property type="match status" value="1"/>
</dbReference>
<dbReference type="FunFam" id="1.25.40.10:FF:000035">
    <property type="entry name" value="Tetratricopeptide repeat domain 7B"/>
    <property type="match status" value="1"/>
</dbReference>
<dbReference type="Gene3D" id="1.25.40.10">
    <property type="entry name" value="Tetratricopeptide repeat domain"/>
    <property type="match status" value="2"/>
</dbReference>
<dbReference type="InterPro" id="IPR051722">
    <property type="entry name" value="Endocytosis_PI4K-reg_protein"/>
</dbReference>
<dbReference type="InterPro" id="IPR011990">
    <property type="entry name" value="TPR-like_helical_dom_sf"/>
</dbReference>
<dbReference type="InterPro" id="IPR019734">
    <property type="entry name" value="TPR_rpt"/>
</dbReference>
<dbReference type="InterPro" id="IPR045819">
    <property type="entry name" value="TTC7_N"/>
</dbReference>
<dbReference type="PANTHER" id="PTHR23083:SF365">
    <property type="entry name" value="TETRATRICOPEPTIDE REPEAT PROTEIN 7B"/>
    <property type="match status" value="1"/>
</dbReference>
<dbReference type="PANTHER" id="PTHR23083">
    <property type="entry name" value="TETRATRICOPEPTIDE REPEAT PROTEIN, TPR"/>
    <property type="match status" value="1"/>
</dbReference>
<dbReference type="Pfam" id="PF12895">
    <property type="entry name" value="ANAPC3"/>
    <property type="match status" value="1"/>
</dbReference>
<dbReference type="Pfam" id="PF13424">
    <property type="entry name" value="TPR_12"/>
    <property type="match status" value="1"/>
</dbReference>
<dbReference type="Pfam" id="PF13181">
    <property type="entry name" value="TPR_8"/>
    <property type="match status" value="2"/>
</dbReference>
<dbReference type="Pfam" id="PF19440">
    <property type="entry name" value="TTC7_N"/>
    <property type="match status" value="1"/>
</dbReference>
<dbReference type="SMART" id="SM00028">
    <property type="entry name" value="TPR"/>
    <property type="match status" value="7"/>
</dbReference>
<dbReference type="SUPFAM" id="SSF48452">
    <property type="entry name" value="TPR-like"/>
    <property type="match status" value="2"/>
</dbReference>
<dbReference type="PROSITE" id="PS50005">
    <property type="entry name" value="TPR"/>
    <property type="match status" value="7"/>
</dbReference>
<dbReference type="PROSITE" id="PS50293">
    <property type="entry name" value="TPR_REGION"/>
    <property type="match status" value="2"/>
</dbReference>
<gene>
    <name type="primary">TTC7B</name>
    <name type="synonym">TTC7L1</name>
</gene>
<organism>
    <name type="scientific">Homo sapiens</name>
    <name type="common">Human</name>
    <dbReference type="NCBI Taxonomy" id="9606"/>
    <lineage>
        <taxon>Eukaryota</taxon>
        <taxon>Metazoa</taxon>
        <taxon>Chordata</taxon>
        <taxon>Craniata</taxon>
        <taxon>Vertebrata</taxon>
        <taxon>Euteleostomi</taxon>
        <taxon>Mammalia</taxon>
        <taxon>Eutheria</taxon>
        <taxon>Euarchontoglires</taxon>
        <taxon>Primates</taxon>
        <taxon>Haplorrhini</taxon>
        <taxon>Catarrhini</taxon>
        <taxon>Hominidae</taxon>
        <taxon>Homo</taxon>
    </lineage>
</organism>
<evidence type="ECO:0000250" key="1">
    <source>
        <dbReference type="UniProtKB" id="E9Q6P5"/>
    </source>
</evidence>
<evidence type="ECO:0000269" key="2">
    <source>
    </source>
</evidence>
<evidence type="ECO:0000269" key="3">
    <source>
    </source>
</evidence>
<evidence type="ECO:0000269" key="4">
    <source>
    </source>
</evidence>
<evidence type="ECO:0000303" key="5">
    <source ref="3"/>
</evidence>
<evidence type="ECO:0000305" key="6"/>
<evidence type="ECO:0007744" key="7">
    <source>
    </source>
</evidence>
<evidence type="ECO:0007744" key="8">
    <source>
    </source>
</evidence>
<evidence type="ECO:0007744" key="9">
    <source>
    </source>
</evidence>
<evidence type="ECO:0007829" key="10">
    <source>
        <dbReference type="PDB" id="5DSE"/>
    </source>
</evidence>
<comment type="function">
    <text evidence="2 4">Component of a complex required to localize phosphatidylinositol 4-kinase (PI4K) to the plasma membrane. The complex acts as a regulator of phosphatidylinositol 4-phosphate (PtdIns(4)P) synthesis. In the complex, plays a central role in bridging PI4KA to EFR3B and HYCC1, via direct interactions (PubMed:26571211).</text>
</comment>
<comment type="subunit">
    <text evidence="2 3 4">Component of a phosphatidylinositol 4-kinase (PI4K) complex, composed of PI4KA, EFR3 (EFR3A or EFR3B), TTC7 (TTC7A or TTC7B) and HYCC (HYCC1 or HYCC2) (PubMed:23229899). Interacts with PI4KA, interaction is direct (PubMed:26571211). Interacts with EFR3 (EFR3A or EFR3B), interaction is direct (PubMed:26571211). Interacts with HYCC (HYCC1 or HYCC2), interaction is direct (PubMed:26571211). Association with the PI4K complex is strongly reduced by TMEM150A (PubMed:25608530).</text>
</comment>
<comment type="interaction">
    <interactant intactId="EBI-12006098">
        <id>Q86TV6</id>
    </interactant>
    <interactant intactId="EBI-3866319">
        <id>Q9Y2V7</id>
        <label>COG6</label>
    </interactant>
    <organismsDiffer>false</organismsDiffer>
    <experiments>3</experiments>
</comment>
<comment type="interaction">
    <interactant intactId="EBI-12006098">
        <id>Q86TV6</id>
    </interactant>
    <interactant intactId="EBI-11065686">
        <id>Q9BYI3</id>
        <label>HYCC1</label>
    </interactant>
    <organismsDiffer>false</organismsDiffer>
    <experiments>5</experiments>
</comment>
<comment type="interaction">
    <interactant intactId="EBI-12006098">
        <id>Q86TV6</id>
    </interactant>
    <interactant intactId="EBI-8787606">
        <id>Q8IXS8</id>
        <label>HYCC2</label>
    </interactant>
    <organismsDiffer>false</organismsDiffer>
    <experiments>3</experiments>
</comment>
<comment type="interaction">
    <interactant intactId="EBI-12006098">
        <id>Q86TV6</id>
    </interactant>
    <interactant intactId="EBI-743796">
        <id>Q8TBN0</id>
        <label>RAB3IL1</label>
    </interactant>
    <organismsDiffer>false</organismsDiffer>
    <experiments>3</experiments>
</comment>
<comment type="interaction">
    <interactant intactId="EBI-12006098">
        <id>Q86TV6</id>
    </interactant>
    <interactant intactId="EBI-6257312">
        <id>Q9BVN2</id>
        <label>RUSC1</label>
    </interactant>
    <organismsDiffer>false</organismsDiffer>
    <experiments>3</experiments>
</comment>
<comment type="subcellular location">
    <subcellularLocation>
        <location evidence="2">Cytoplasm</location>
        <location evidence="2">Cytosol</location>
    </subcellularLocation>
    <subcellularLocation>
        <location evidence="2">Cell membrane</location>
    </subcellularLocation>
    <text evidence="2">Localizes to the cytosol and is recruited to the plasma membrane following interaction with EFR3 (EFR3A or EFR3B) (PubMed:23229899).</text>
</comment>
<comment type="alternative products">
    <event type="alternative splicing"/>
    <isoform>
        <id>Q86TV6-1</id>
        <name>1</name>
        <sequence type="displayed"/>
    </isoform>
    <isoform>
        <id>Q86TV6-2</id>
        <name>2</name>
        <sequence type="described" ref="VSP_008061"/>
    </isoform>
</comment>
<comment type="sequence caution" evidence="6">
    <conflict type="erroneous initiation">
        <sequence resource="EMBL-CDS" id="CAI46128"/>
    </conflict>
    <text>Truncated N-terminus.</text>
</comment>
<comment type="sequence caution" evidence="6">
    <conflict type="frameshift">
        <sequence resource="EMBL-CDS" id="CAI46128"/>
    </conflict>
</comment>
<proteinExistence type="evidence at protein level"/>
<feature type="chain" id="PRO_0000106387" description="Tetratricopeptide repeat protein 7B">
    <location>
        <begin position="1"/>
        <end position="843"/>
    </location>
</feature>
<feature type="repeat" description="TPR 1">
    <location>
        <begin position="97"/>
        <end position="131"/>
    </location>
</feature>
<feature type="repeat" description="TPR 2">
    <location>
        <begin position="219"/>
        <end position="252"/>
    </location>
</feature>
<feature type="repeat" description="TPR 3">
    <location>
        <begin position="363"/>
        <end position="396"/>
    </location>
</feature>
<feature type="repeat" description="TPR 4">
    <location>
        <begin position="397"/>
        <end position="430"/>
    </location>
</feature>
<feature type="repeat" description="TPR 5">
    <location>
        <begin position="479"/>
        <end position="514"/>
    </location>
</feature>
<feature type="repeat" description="TPR 6">
    <location>
        <begin position="516"/>
        <end position="548"/>
    </location>
</feature>
<feature type="repeat" description="TPR 7">
    <location>
        <begin position="549"/>
        <end position="582"/>
    </location>
</feature>
<feature type="repeat" description="TPR 8">
    <location>
        <begin position="696"/>
        <end position="729"/>
    </location>
</feature>
<feature type="repeat" description="TPR 9">
    <location>
        <begin position="730"/>
        <end position="763"/>
    </location>
</feature>
<feature type="repeat" description="TPR 10">
    <location>
        <begin position="765"/>
        <end position="797"/>
    </location>
</feature>
<feature type="repeat" description="TPR 11">
    <location>
        <begin position="798"/>
        <end position="831"/>
    </location>
</feature>
<feature type="modified residue" description="Phosphoserine" evidence="8">
    <location>
        <position position="160"/>
    </location>
</feature>
<feature type="modified residue" description="Phosphoserine" evidence="1">
    <location>
        <position position="202"/>
    </location>
</feature>
<feature type="modified residue" description="Phosphoserine" evidence="1">
    <location>
        <position position="625"/>
    </location>
</feature>
<feature type="modified residue" description="Phosphoserine" evidence="1">
    <location>
        <position position="629"/>
    </location>
</feature>
<feature type="modified residue" description="Phosphoserine" evidence="1">
    <location>
        <position position="630"/>
    </location>
</feature>
<feature type="modified residue" description="Phosphoserine" evidence="7 8">
    <location>
        <position position="673"/>
    </location>
</feature>
<feature type="modified residue" description="Phosphoserine" evidence="8">
    <location>
        <position position="677"/>
    </location>
</feature>
<feature type="modified residue" description="Phosphoserine" evidence="8 9">
    <location>
        <position position="678"/>
    </location>
</feature>
<feature type="modified residue" description="Phosphoserine" evidence="8">
    <location>
        <position position="681"/>
    </location>
</feature>
<feature type="splice variant" id="VSP_008061" description="In isoform 2." evidence="5">
    <original>G</original>
    <variation>GNSPEAYFHGFPSLFSVS</variation>
    <location>
        <position position="656"/>
    </location>
</feature>
<feature type="helix" evidence="10">
    <location>
        <begin position="9"/>
        <end position="19"/>
    </location>
</feature>
<feature type="turn" evidence="10">
    <location>
        <begin position="23"/>
        <end position="25"/>
    </location>
</feature>
<feature type="helix" evidence="10">
    <location>
        <begin position="26"/>
        <end position="32"/>
    </location>
</feature>
<feature type="helix" evidence="10">
    <location>
        <begin position="43"/>
        <end position="59"/>
    </location>
</feature>
<feature type="helix" evidence="10">
    <location>
        <begin position="73"/>
        <end position="88"/>
    </location>
</feature>
<feature type="helix" evidence="10">
    <location>
        <begin position="93"/>
        <end position="110"/>
    </location>
</feature>
<feature type="helix" evidence="10">
    <location>
        <begin position="113"/>
        <end position="123"/>
    </location>
</feature>
<feature type="helix" evidence="10">
    <location>
        <begin position="125"/>
        <end position="127"/>
    </location>
</feature>
<feature type="helix" evidence="10">
    <location>
        <begin position="135"/>
        <end position="139"/>
    </location>
</feature>
<feature type="helix" evidence="10">
    <location>
        <begin position="141"/>
        <end position="152"/>
    </location>
</feature>
<feature type="helix" evidence="10">
    <location>
        <begin position="172"/>
        <end position="192"/>
    </location>
</feature>
<feature type="helix" evidence="10">
    <location>
        <begin position="216"/>
        <end position="232"/>
    </location>
</feature>
<feature type="helix" evidence="10">
    <location>
        <begin position="235"/>
        <end position="247"/>
    </location>
</feature>
<feature type="turn" evidence="10">
    <location>
        <begin position="252"/>
        <end position="254"/>
    </location>
</feature>
<feature type="helix" evidence="10">
    <location>
        <begin position="255"/>
        <end position="272"/>
    </location>
</feature>
<feature type="turn" evidence="10">
    <location>
        <begin position="275"/>
        <end position="277"/>
    </location>
</feature>
<feature type="strand" evidence="10">
    <location>
        <begin position="281"/>
        <end position="283"/>
    </location>
</feature>
<feature type="helix" evidence="10">
    <location>
        <begin position="324"/>
        <end position="339"/>
    </location>
</feature>
<feature type="helix" evidence="10">
    <location>
        <begin position="364"/>
        <end position="374"/>
    </location>
</feature>
<feature type="turn" evidence="10">
    <location>
        <begin position="375"/>
        <end position="377"/>
    </location>
</feature>
<feature type="helix" evidence="10">
    <location>
        <begin position="379"/>
        <end position="389"/>
    </location>
</feature>
<feature type="turn" evidence="10">
    <location>
        <begin position="390"/>
        <end position="392"/>
    </location>
</feature>
<feature type="helix" evidence="10">
    <location>
        <begin position="397"/>
        <end position="410"/>
    </location>
</feature>
<feature type="helix" evidence="10">
    <location>
        <begin position="413"/>
        <end position="426"/>
    </location>
</feature>
<feature type="helix" evidence="10">
    <location>
        <begin position="432"/>
        <end position="442"/>
    </location>
</feature>
<feature type="helix" evidence="10">
    <location>
        <begin position="448"/>
        <end position="458"/>
    </location>
</feature>
<feature type="helix" evidence="10">
    <location>
        <begin position="466"/>
        <end position="486"/>
    </location>
</feature>
<feature type="helix" evidence="10">
    <location>
        <begin position="490"/>
        <end position="510"/>
    </location>
</feature>
<feature type="helix" evidence="10">
    <location>
        <begin position="515"/>
        <end position="527"/>
    </location>
</feature>
<feature type="helix" evidence="10">
    <location>
        <begin position="531"/>
        <end position="544"/>
    </location>
</feature>
<feature type="helix" evidence="10">
    <location>
        <begin position="549"/>
        <end position="561"/>
    </location>
</feature>
<feature type="helix" evidence="10">
    <location>
        <begin position="565"/>
        <end position="578"/>
    </location>
</feature>
<feature type="helix" evidence="10">
    <location>
        <begin position="583"/>
        <end position="596"/>
    </location>
</feature>
<feature type="helix" evidence="10">
    <location>
        <begin position="599"/>
        <end position="616"/>
    </location>
</feature>
<feature type="helix" evidence="10">
    <location>
        <begin position="692"/>
        <end position="709"/>
    </location>
</feature>
<feature type="helix" evidence="10">
    <location>
        <begin position="712"/>
        <end position="725"/>
    </location>
</feature>
<feature type="helix" evidence="10">
    <location>
        <begin position="730"/>
        <end position="743"/>
    </location>
</feature>
<feature type="helix" evidence="10">
    <location>
        <begin position="746"/>
        <end position="759"/>
    </location>
</feature>
<feature type="helix" evidence="10">
    <location>
        <begin position="764"/>
        <end position="777"/>
    </location>
</feature>
<feature type="helix" evidence="10">
    <location>
        <begin position="780"/>
        <end position="793"/>
    </location>
</feature>
<feature type="helix" evidence="10">
    <location>
        <begin position="798"/>
        <end position="811"/>
    </location>
</feature>
<feature type="helix" evidence="10">
    <location>
        <begin position="814"/>
        <end position="829"/>
    </location>
</feature>
<feature type="helix" evidence="10">
    <location>
        <begin position="836"/>
        <end position="838"/>
    </location>
</feature>